<feature type="chain" id="PRO_0000052570" description="Hemoglobin subunit alpha">
    <location>
        <begin position="1"/>
        <end position="141"/>
    </location>
</feature>
<feature type="peptide" id="PRO_0000455843" description="Hemopressin" evidence="2">
    <location>
        <begin position="95"/>
        <end position="103"/>
    </location>
</feature>
<feature type="domain" description="Globin" evidence="4">
    <location>
        <begin position="1"/>
        <end position="141"/>
    </location>
</feature>
<feature type="binding site" evidence="4">
    <location>
        <position position="58"/>
    </location>
    <ligand>
        <name>O2</name>
        <dbReference type="ChEBI" id="CHEBI:15379"/>
    </ligand>
</feature>
<feature type="binding site" description="proximal binding residue" evidence="4">
    <location>
        <position position="87"/>
    </location>
    <ligand>
        <name>heme b</name>
        <dbReference type="ChEBI" id="CHEBI:60344"/>
    </ligand>
    <ligandPart>
        <name>Fe</name>
        <dbReference type="ChEBI" id="CHEBI:18248"/>
    </ligandPart>
</feature>
<feature type="modified residue" description="Phosphoserine" evidence="3">
    <location>
        <position position="3"/>
    </location>
</feature>
<feature type="modified residue" description="N6-succinyllysine" evidence="1">
    <location>
        <position position="7"/>
    </location>
</feature>
<feature type="modified residue" description="N6-succinyllysine" evidence="1">
    <location>
        <position position="11"/>
    </location>
</feature>
<feature type="modified residue" description="N6-acetyllysine; alternate" evidence="3">
    <location>
        <position position="16"/>
    </location>
</feature>
<feature type="modified residue" description="N6-succinyllysine; alternate" evidence="1">
    <location>
        <position position="16"/>
    </location>
</feature>
<feature type="modified residue" description="Phosphotyrosine" evidence="3">
    <location>
        <position position="24"/>
    </location>
</feature>
<feature type="modified residue" description="Phosphoserine" evidence="3">
    <location>
        <position position="35"/>
    </location>
</feature>
<feature type="modified residue" description="N6-succinyllysine" evidence="1">
    <location>
        <position position="40"/>
    </location>
</feature>
<feature type="modified residue" description="Phosphoserine" evidence="3">
    <location>
        <position position="49"/>
    </location>
</feature>
<feature type="modified residue" description="Phosphothreonine" evidence="1">
    <location>
        <position position="108"/>
    </location>
</feature>
<feature type="modified residue" description="Phosphoserine" evidence="1">
    <location>
        <position position="124"/>
    </location>
</feature>
<feature type="modified residue" description="Phosphothreonine" evidence="1">
    <location>
        <position position="134"/>
    </location>
</feature>
<feature type="modified residue" description="Phosphothreonine" evidence="1">
    <location>
        <position position="137"/>
    </location>
</feature>
<feature type="modified residue" description="Phosphoserine" evidence="1">
    <location>
        <position position="138"/>
    </location>
</feature>
<comment type="function">
    <text>Involved in oxygen transport from the lung to the various peripheral tissues.</text>
</comment>
<comment type="function">
    <molecule>Hemopressin</molecule>
    <text evidence="2">Hemopressin acts as an antagonist peptide of the cannabinoid receptor CNR1. Hemopressin-binding efficiently blocks cannabinoid receptor CNR1 and subsequent signaling.</text>
</comment>
<comment type="subunit">
    <text>Heterotetramer of two alpha chains and two beta chains.</text>
</comment>
<comment type="tissue specificity">
    <text>Red blood cells.</text>
</comment>
<comment type="similarity">
    <text evidence="4">Belongs to the globin family.</text>
</comment>
<reference key="1">
    <citation type="journal article" date="1989" name="Biol. Chem. Hoppe-Seyler">
        <title>The primary structure of pale-throated three-toed sloth (Bradypus tridactylus, Xenarthra) hemoglobin.</title>
        <authorList>
            <person name="Kleinschmidt T."/>
            <person name="Marz J."/>
            <person name="Braunitzer G."/>
        </authorList>
    </citation>
    <scope>PROTEIN SEQUENCE</scope>
</reference>
<name>HBA_BRATR</name>
<evidence type="ECO:0000250" key="1">
    <source>
        <dbReference type="UniProtKB" id="P01942"/>
    </source>
</evidence>
<evidence type="ECO:0000250" key="2">
    <source>
        <dbReference type="UniProtKB" id="P01946"/>
    </source>
</evidence>
<evidence type="ECO:0000250" key="3">
    <source>
        <dbReference type="UniProtKB" id="P69905"/>
    </source>
</evidence>
<evidence type="ECO:0000255" key="4">
    <source>
        <dbReference type="PROSITE-ProRule" id="PRU00238"/>
    </source>
</evidence>
<accession>P14525</accession>
<protein>
    <recommendedName>
        <fullName>Hemoglobin subunit alpha</fullName>
    </recommendedName>
    <alternativeName>
        <fullName>Alpha-globin</fullName>
    </alternativeName>
    <alternativeName>
        <fullName>Hemoglobin alpha chain</fullName>
    </alternativeName>
    <component>
        <recommendedName>
            <fullName evidence="2">Hemopressin</fullName>
        </recommendedName>
    </component>
</protein>
<keyword id="KW-0007">Acetylation</keyword>
<keyword id="KW-0903">Direct protein sequencing</keyword>
<keyword id="KW-0349">Heme</keyword>
<keyword id="KW-0408">Iron</keyword>
<keyword id="KW-0479">Metal-binding</keyword>
<keyword id="KW-0561">Oxygen transport</keyword>
<keyword id="KW-0597">Phosphoprotein</keyword>
<keyword id="KW-0813">Transport</keyword>
<gene>
    <name type="primary">HBA</name>
</gene>
<sequence>VLSAADKAHVKAFWTKIGGHAGEYGGEALERTFLSFPTTKTYFPHFDLSPGSAQVKAHGKKVGDALTLAVGHLDDLPGALSDLSDLHAHKLRVDPVNFKLLGHCVLVTLALHHPDAFTPAVHASLDKFITTVSTVLTSKYR</sequence>
<proteinExistence type="evidence at protein level"/>
<dbReference type="PIR" id="S03998">
    <property type="entry name" value="HAOWP"/>
</dbReference>
<dbReference type="SMR" id="P14525"/>
<dbReference type="GO" id="GO:0072562">
    <property type="term" value="C:blood microparticle"/>
    <property type="evidence" value="ECO:0007669"/>
    <property type="project" value="TreeGrafter"/>
</dbReference>
<dbReference type="GO" id="GO:0031838">
    <property type="term" value="C:haptoglobin-hemoglobin complex"/>
    <property type="evidence" value="ECO:0007669"/>
    <property type="project" value="TreeGrafter"/>
</dbReference>
<dbReference type="GO" id="GO:0005833">
    <property type="term" value="C:hemoglobin complex"/>
    <property type="evidence" value="ECO:0007669"/>
    <property type="project" value="InterPro"/>
</dbReference>
<dbReference type="GO" id="GO:0031720">
    <property type="term" value="F:haptoglobin binding"/>
    <property type="evidence" value="ECO:0007669"/>
    <property type="project" value="TreeGrafter"/>
</dbReference>
<dbReference type="GO" id="GO:0020037">
    <property type="term" value="F:heme binding"/>
    <property type="evidence" value="ECO:0007669"/>
    <property type="project" value="InterPro"/>
</dbReference>
<dbReference type="GO" id="GO:0005506">
    <property type="term" value="F:iron ion binding"/>
    <property type="evidence" value="ECO:0007669"/>
    <property type="project" value="InterPro"/>
</dbReference>
<dbReference type="GO" id="GO:0043177">
    <property type="term" value="F:organic acid binding"/>
    <property type="evidence" value="ECO:0007669"/>
    <property type="project" value="TreeGrafter"/>
</dbReference>
<dbReference type="GO" id="GO:0019825">
    <property type="term" value="F:oxygen binding"/>
    <property type="evidence" value="ECO:0007669"/>
    <property type="project" value="InterPro"/>
</dbReference>
<dbReference type="GO" id="GO:0005344">
    <property type="term" value="F:oxygen carrier activity"/>
    <property type="evidence" value="ECO:0007669"/>
    <property type="project" value="UniProtKB-KW"/>
</dbReference>
<dbReference type="GO" id="GO:0004601">
    <property type="term" value="F:peroxidase activity"/>
    <property type="evidence" value="ECO:0007669"/>
    <property type="project" value="TreeGrafter"/>
</dbReference>
<dbReference type="GO" id="GO:0042744">
    <property type="term" value="P:hydrogen peroxide catabolic process"/>
    <property type="evidence" value="ECO:0007669"/>
    <property type="project" value="TreeGrafter"/>
</dbReference>
<dbReference type="CDD" id="cd08927">
    <property type="entry name" value="Hb-alpha-like"/>
    <property type="match status" value="1"/>
</dbReference>
<dbReference type="FunFam" id="1.10.490.10:FF:000002">
    <property type="entry name" value="Hemoglobin subunit alpha"/>
    <property type="match status" value="1"/>
</dbReference>
<dbReference type="Gene3D" id="1.10.490.10">
    <property type="entry name" value="Globins"/>
    <property type="match status" value="1"/>
</dbReference>
<dbReference type="InterPro" id="IPR000971">
    <property type="entry name" value="Globin"/>
</dbReference>
<dbReference type="InterPro" id="IPR009050">
    <property type="entry name" value="Globin-like_sf"/>
</dbReference>
<dbReference type="InterPro" id="IPR012292">
    <property type="entry name" value="Globin/Proto"/>
</dbReference>
<dbReference type="InterPro" id="IPR002338">
    <property type="entry name" value="Hemoglobin_a-typ"/>
</dbReference>
<dbReference type="InterPro" id="IPR050056">
    <property type="entry name" value="Hemoglobin_oxygen_transport"/>
</dbReference>
<dbReference type="InterPro" id="IPR002339">
    <property type="entry name" value="Hemoglobin_pi"/>
</dbReference>
<dbReference type="PANTHER" id="PTHR11442">
    <property type="entry name" value="HEMOGLOBIN FAMILY MEMBER"/>
    <property type="match status" value="1"/>
</dbReference>
<dbReference type="PANTHER" id="PTHR11442:SF48">
    <property type="entry name" value="HEMOGLOBIN SUBUNIT ALPHA"/>
    <property type="match status" value="1"/>
</dbReference>
<dbReference type="Pfam" id="PF00042">
    <property type="entry name" value="Globin"/>
    <property type="match status" value="1"/>
</dbReference>
<dbReference type="PRINTS" id="PR00612">
    <property type="entry name" value="ALPHAHAEM"/>
</dbReference>
<dbReference type="PRINTS" id="PR00815">
    <property type="entry name" value="PIHAEM"/>
</dbReference>
<dbReference type="SUPFAM" id="SSF46458">
    <property type="entry name" value="Globin-like"/>
    <property type="match status" value="1"/>
</dbReference>
<dbReference type="PROSITE" id="PS01033">
    <property type="entry name" value="GLOBIN"/>
    <property type="match status" value="1"/>
</dbReference>
<organism>
    <name type="scientific">Bradypus tridactylus</name>
    <name type="common">Pale-throated three-toed sloth</name>
    <dbReference type="NCBI Taxonomy" id="9354"/>
    <lineage>
        <taxon>Eukaryota</taxon>
        <taxon>Metazoa</taxon>
        <taxon>Chordata</taxon>
        <taxon>Craniata</taxon>
        <taxon>Vertebrata</taxon>
        <taxon>Euteleostomi</taxon>
        <taxon>Mammalia</taxon>
        <taxon>Eutheria</taxon>
        <taxon>Xenarthra</taxon>
        <taxon>Pilosa</taxon>
        <taxon>Folivora</taxon>
        <taxon>Bradypodidae</taxon>
        <taxon>Bradypus</taxon>
    </lineage>
</organism>